<dbReference type="EMBL" id="AY366353">
    <property type="protein sequence ID" value="AAR12187.1"/>
    <property type="molecule type" value="mRNA"/>
</dbReference>
<dbReference type="EMBL" id="AY366354">
    <property type="protein sequence ID" value="AAR12188.1"/>
    <property type="molecule type" value="Genomic_DNA"/>
</dbReference>
<dbReference type="EMBL" id="AY438032">
    <property type="protein sequence ID" value="AAR97322.1"/>
    <property type="molecule type" value="mRNA"/>
</dbReference>
<dbReference type="RefSeq" id="NP_001117939.1">
    <property type="nucleotide sequence ID" value="NM_001124467.2"/>
</dbReference>
<dbReference type="SMR" id="Q6UNA4"/>
<dbReference type="GlyCosmos" id="Q6UNA4">
    <property type="glycosylation" value="1 site, No reported glycans"/>
</dbReference>
<dbReference type="GeneID" id="100136191"/>
<dbReference type="KEGG" id="omy:100136191"/>
<dbReference type="CTD" id="443120"/>
<dbReference type="OrthoDB" id="9835842at2759"/>
<dbReference type="Proteomes" id="UP000694395">
    <property type="component" value="Unplaced"/>
</dbReference>
<dbReference type="GO" id="GO:0045177">
    <property type="term" value="C:apical part of cell"/>
    <property type="evidence" value="ECO:0000250"/>
    <property type="project" value="UniProtKB"/>
</dbReference>
<dbReference type="GO" id="GO:0016323">
    <property type="term" value="C:basolateral plasma membrane"/>
    <property type="evidence" value="ECO:0000250"/>
    <property type="project" value="UniProtKB"/>
</dbReference>
<dbReference type="GO" id="GO:0001856">
    <property type="term" value="F:complement component C5a binding"/>
    <property type="evidence" value="ECO:0000353"/>
    <property type="project" value="AgBase"/>
</dbReference>
<dbReference type="GO" id="GO:0004878">
    <property type="term" value="F:complement component C5a receptor activity"/>
    <property type="evidence" value="ECO:0000250"/>
    <property type="project" value="UniProtKB"/>
</dbReference>
<dbReference type="GO" id="GO:0004930">
    <property type="term" value="F:G protein-coupled receptor activity"/>
    <property type="evidence" value="ECO:0007669"/>
    <property type="project" value="UniProtKB-KW"/>
</dbReference>
<dbReference type="GO" id="GO:0006935">
    <property type="term" value="P:chemotaxis"/>
    <property type="evidence" value="ECO:0007669"/>
    <property type="project" value="UniProtKB-KW"/>
</dbReference>
<dbReference type="GO" id="GO:0006954">
    <property type="term" value="P:inflammatory response"/>
    <property type="evidence" value="ECO:0007669"/>
    <property type="project" value="TreeGrafter"/>
</dbReference>
<dbReference type="GO" id="GO:0042789">
    <property type="term" value="P:mRNA transcription by RNA polymerase II"/>
    <property type="evidence" value="ECO:0000250"/>
    <property type="project" value="UniProtKB"/>
</dbReference>
<dbReference type="GO" id="GO:0007200">
    <property type="term" value="P:phospholipase C-activating G protein-coupled receptor signaling pathway"/>
    <property type="evidence" value="ECO:0007669"/>
    <property type="project" value="TreeGrafter"/>
</dbReference>
<dbReference type="GO" id="GO:0007204">
    <property type="term" value="P:positive regulation of cytosolic calcium ion concentration"/>
    <property type="evidence" value="ECO:0007669"/>
    <property type="project" value="TreeGrafter"/>
</dbReference>
<dbReference type="GO" id="GO:0050679">
    <property type="term" value="P:positive regulation of epithelial cell proliferation"/>
    <property type="evidence" value="ECO:0000250"/>
    <property type="project" value="UniProtKB"/>
</dbReference>
<dbReference type="GO" id="GO:0070374">
    <property type="term" value="P:positive regulation of ERK1 and ERK2 cascade"/>
    <property type="evidence" value="ECO:0000250"/>
    <property type="project" value="UniProtKB"/>
</dbReference>
<dbReference type="GO" id="GO:0071624">
    <property type="term" value="P:positive regulation of granulocyte chemotaxis"/>
    <property type="evidence" value="ECO:0000314"/>
    <property type="project" value="AgBase"/>
</dbReference>
<dbReference type="GO" id="GO:0002690">
    <property type="term" value="P:positive regulation of leukocyte chemotaxis"/>
    <property type="evidence" value="ECO:0000315"/>
    <property type="project" value="AgBase"/>
</dbReference>
<dbReference type="FunFam" id="1.20.1070.10:FF:000034">
    <property type="entry name" value="G-protein coupled receptor 1"/>
    <property type="match status" value="1"/>
</dbReference>
<dbReference type="Gene3D" id="1.20.1070.10">
    <property type="entry name" value="Rhodopsin 7-helix transmembrane proteins"/>
    <property type="match status" value="1"/>
</dbReference>
<dbReference type="InterPro" id="IPR000826">
    <property type="entry name" value="Formyl_rcpt-rel"/>
</dbReference>
<dbReference type="InterPro" id="IPR000276">
    <property type="entry name" value="GPCR_Rhodpsn"/>
</dbReference>
<dbReference type="InterPro" id="IPR017452">
    <property type="entry name" value="GPCR_Rhodpsn_7TM"/>
</dbReference>
<dbReference type="PANTHER" id="PTHR24225:SF56">
    <property type="entry name" value="C5A ANAPHYLATOXIN CHEMOTACTIC RECEPTOR 1"/>
    <property type="match status" value="1"/>
</dbReference>
<dbReference type="PANTHER" id="PTHR24225">
    <property type="entry name" value="CHEMOTACTIC RECEPTOR"/>
    <property type="match status" value="1"/>
</dbReference>
<dbReference type="Pfam" id="PF00001">
    <property type="entry name" value="7tm_1"/>
    <property type="match status" value="1"/>
</dbReference>
<dbReference type="PRINTS" id="PR00526">
    <property type="entry name" value="FMETLEUPHER"/>
</dbReference>
<dbReference type="PRINTS" id="PR00237">
    <property type="entry name" value="GPCRRHODOPSN"/>
</dbReference>
<dbReference type="SMART" id="SM01381">
    <property type="entry name" value="7TM_GPCR_Srsx"/>
    <property type="match status" value="1"/>
</dbReference>
<dbReference type="SUPFAM" id="SSF81321">
    <property type="entry name" value="Family A G protein-coupled receptor-like"/>
    <property type="match status" value="1"/>
</dbReference>
<dbReference type="PROSITE" id="PS00237">
    <property type="entry name" value="G_PROTEIN_RECEP_F1_1"/>
    <property type="match status" value="1"/>
</dbReference>
<dbReference type="PROSITE" id="PS50262">
    <property type="entry name" value="G_PROTEIN_RECEP_F1_2"/>
    <property type="match status" value="1"/>
</dbReference>
<gene>
    <name type="primary">c5ar1</name>
</gene>
<proteinExistence type="evidence at transcript level"/>
<comment type="function">
    <text evidence="5">Receptor for the chemotactic and inflammatory peptide anaphylatoxin C5a. This receptor stimulates chemotaxis, granule enzyme release and superoxide anion production.</text>
</comment>
<comment type="subcellular location">
    <subcellularLocation>
        <location evidence="4">Cell membrane</location>
        <topology evidence="1">Multi-pass membrane protein</topology>
    </subcellularLocation>
</comment>
<comment type="tissue specificity">
    <text evidence="4 5">High expression in head, kidney and posterior kidney, lower levels in peripheral blood leukocytes and spleen, low expression in brain and gills, heart, intestine and very low expression in liver and muscle.</text>
</comment>
<comment type="similarity">
    <text evidence="3">Belongs to the G-protein coupled receptor 1 family.</text>
</comment>
<accession>Q6UNA4</accession>
<accession>Q6T3R0</accession>
<protein>
    <recommendedName>
        <fullName>C5a anaphylatoxin chemotactic receptor 1</fullName>
    </recommendedName>
    <alternativeName>
        <fullName>C5a anaphylatoxin chemotactic receptor</fullName>
        <shortName>C5a-R</shortName>
        <shortName>C5aR</shortName>
    </alternativeName>
</protein>
<sequence>MDDMCSILTEEELSLYNITDCEFVKPGGLGPVLGPRHLSALVFYGLVFLLGVPGNALVVWVTGFRMPRSVTSLWFLNLALADLLCCLSLPLLMVPLAMDQHWPFGPVACKLLKGLLYLIMFCSVLLLVLISLDRFLLVSWPVWCQNWRRPRKAGWVCVGVWLLALLGSIPQFVYVKEVQLSTSKSECLGLYTVASAWANTTARFLVGFVLPFITIVTCHWVVYSRARRGSGVGPGRVSEARSRRTLRVIVAVSLSFFLCWFPLHILDFLVLSTPRHSSHSANIQLAHTLALCLAYCNSCLNPLLYVCLGRGFKQNINRSLRNMFNFATEESVTRQSMFKSTSERTQEMNM</sequence>
<organism>
    <name type="scientific">Oncorhynchus mykiss</name>
    <name type="common">Rainbow trout</name>
    <name type="synonym">Salmo gairdneri</name>
    <dbReference type="NCBI Taxonomy" id="8022"/>
    <lineage>
        <taxon>Eukaryota</taxon>
        <taxon>Metazoa</taxon>
        <taxon>Chordata</taxon>
        <taxon>Craniata</taxon>
        <taxon>Vertebrata</taxon>
        <taxon>Euteleostomi</taxon>
        <taxon>Actinopterygii</taxon>
        <taxon>Neopterygii</taxon>
        <taxon>Teleostei</taxon>
        <taxon>Protacanthopterygii</taxon>
        <taxon>Salmoniformes</taxon>
        <taxon>Salmonidae</taxon>
        <taxon>Salmoninae</taxon>
        <taxon>Oncorhynchus</taxon>
    </lineage>
</organism>
<reference key="1">
    <citation type="journal article" date="2003" name="Immunogenetics">
        <title>Molecular cloning and characterization of rainbow trout (Oncorhynchus mykiss) C5a anaphylatoxin receptor.</title>
        <authorList>
            <person name="Fujiki K."/>
            <person name="Liu L."/>
            <person name="Sundick R.S."/>
            <person name="Dixon B."/>
        </authorList>
    </citation>
    <scope>NUCLEOTIDE SEQUENCE [GENOMIC DNA / MRNA]</scope>
    <scope>TISSUE SPECIFICITY</scope>
    <source>
        <tissue>Head</tissue>
        <tissue>Kidney</tissue>
    </source>
</reference>
<reference key="2">
    <citation type="journal article" date="2004" name="J. Immunol.">
        <title>Cloning, expression, cellular distribution, and role in chemotaxis of a C5a receptor in rainbow trout: the first identification of a C5a receptor in a nonmammalian species.</title>
        <authorList>
            <person name="Boshra H."/>
            <person name="Li J."/>
            <person name="Peters R."/>
            <person name="Hansen J."/>
            <person name="Matlapudi A."/>
            <person name="Sunyer J.O."/>
        </authorList>
    </citation>
    <scope>NUCLEOTIDE SEQUENCE [MRNA] OF 1-346</scope>
    <scope>FUNCTION</scope>
    <scope>SUBCELLULAR LOCATION</scope>
    <scope>TISSUE SPECIFICITY</scope>
</reference>
<evidence type="ECO:0000250" key="1">
    <source>
        <dbReference type="UniProtKB" id="P21730"/>
    </source>
</evidence>
<evidence type="ECO:0000255" key="2"/>
<evidence type="ECO:0000255" key="3">
    <source>
        <dbReference type="PROSITE-ProRule" id="PRU00521"/>
    </source>
</evidence>
<evidence type="ECO:0000269" key="4">
    <source>
    </source>
</evidence>
<evidence type="ECO:0000269" key="5">
    <source>
    </source>
</evidence>
<evidence type="ECO:0000305" key="6"/>
<name>C5AR1_ONCMY</name>
<keyword id="KW-1003">Cell membrane</keyword>
<keyword id="KW-0145">Chemotaxis</keyword>
<keyword id="KW-1015">Disulfide bond</keyword>
<keyword id="KW-0297">G-protein coupled receptor</keyword>
<keyword id="KW-0325">Glycoprotein</keyword>
<keyword id="KW-0472">Membrane</keyword>
<keyword id="KW-0675">Receptor</keyword>
<keyword id="KW-0807">Transducer</keyword>
<keyword id="KW-0812">Transmembrane</keyword>
<keyword id="KW-1133">Transmembrane helix</keyword>
<feature type="chain" id="PRO_0000343796" description="C5a anaphylatoxin chemotactic receptor 1">
    <location>
        <begin position="1"/>
        <end position="350"/>
    </location>
</feature>
<feature type="topological domain" description="Extracellular" evidence="6">
    <location>
        <begin position="1"/>
        <end position="37"/>
    </location>
</feature>
<feature type="transmembrane region" description="Helical; Name=1" evidence="1">
    <location>
        <begin position="38"/>
        <end position="64"/>
    </location>
</feature>
<feature type="topological domain" description="Cytoplasmic" evidence="6">
    <location>
        <begin position="65"/>
        <end position="69"/>
    </location>
</feature>
<feature type="transmembrane region" description="Helical; Name=2" evidence="1">
    <location>
        <begin position="70"/>
        <end position="93"/>
    </location>
</feature>
<feature type="topological domain" description="Extracellular" evidence="6">
    <location>
        <begin position="94"/>
        <end position="110"/>
    </location>
</feature>
<feature type="transmembrane region" description="Helical; Name=3" evidence="1">
    <location>
        <begin position="111"/>
        <end position="132"/>
    </location>
</feature>
<feature type="topological domain" description="Cytoplasmic" evidence="6">
    <location>
        <begin position="133"/>
        <end position="154"/>
    </location>
</feature>
<feature type="transmembrane region" description="Helical; Name=4" evidence="1">
    <location>
        <begin position="155"/>
        <end position="174"/>
    </location>
</feature>
<feature type="topological domain" description="Extracellular" evidence="6">
    <location>
        <begin position="175"/>
        <end position="197"/>
    </location>
</feature>
<feature type="transmembrane region" description="Helical; Name=5" evidence="1">
    <location>
        <begin position="198"/>
        <end position="223"/>
    </location>
</feature>
<feature type="topological domain" description="Cytoplasmic" evidence="6">
    <location>
        <begin position="224"/>
        <end position="247"/>
    </location>
</feature>
<feature type="transmembrane region" description="Helical; Name=6" evidence="1">
    <location>
        <begin position="248"/>
        <end position="270"/>
    </location>
</feature>
<feature type="topological domain" description="Extracellular" evidence="6">
    <location>
        <begin position="271"/>
        <end position="287"/>
    </location>
</feature>
<feature type="transmembrane region" description="Helical; Name=7" evidence="1">
    <location>
        <begin position="288"/>
        <end position="308"/>
    </location>
</feature>
<feature type="topological domain" description="Cytoplasmic" evidence="6">
    <location>
        <begin position="309"/>
        <end position="350"/>
    </location>
</feature>
<feature type="glycosylation site" description="N-linked (GlcNAc...) asparagine" evidence="2">
    <location>
        <position position="17"/>
    </location>
</feature>
<feature type="disulfide bond" evidence="3">
    <location>
        <begin position="109"/>
        <end position="187"/>
    </location>
</feature>
<feature type="sequence conflict" description="In Ref. 2; AAR97322." evidence="6" ref="2">
    <original>A</original>
    <variation>V</variation>
    <location>
        <position position="286"/>
    </location>
</feature>